<keyword id="KW-0025">Alternative splicing</keyword>
<keyword id="KW-0129">CBS domain</keyword>
<keyword id="KW-0868">Chloride</keyword>
<keyword id="KW-0869">Chloride channel</keyword>
<keyword id="KW-0407">Ion channel</keyword>
<keyword id="KW-0406">Ion transport</keyword>
<keyword id="KW-0472">Membrane</keyword>
<keyword id="KW-1185">Reference proteome</keyword>
<keyword id="KW-0677">Repeat</keyword>
<keyword id="KW-0812">Transmembrane</keyword>
<keyword id="KW-1133">Transmembrane helix</keyword>
<keyword id="KW-0813">Transport</keyword>
<keyword id="KW-0851">Voltage-gated channel</keyword>
<name>CLCF_ARATH</name>
<organism>
    <name type="scientific">Arabidopsis thaliana</name>
    <name type="common">Mouse-ear cress</name>
    <dbReference type="NCBI Taxonomy" id="3702"/>
    <lineage>
        <taxon>Eukaryota</taxon>
        <taxon>Viridiplantae</taxon>
        <taxon>Streptophyta</taxon>
        <taxon>Embryophyta</taxon>
        <taxon>Tracheophyta</taxon>
        <taxon>Spermatophyta</taxon>
        <taxon>Magnoliopsida</taxon>
        <taxon>eudicotyledons</taxon>
        <taxon>Gunneridae</taxon>
        <taxon>Pentapetalae</taxon>
        <taxon>rosids</taxon>
        <taxon>malvids</taxon>
        <taxon>Brassicales</taxon>
        <taxon>Brassicaceae</taxon>
        <taxon>Camelineae</taxon>
        <taxon>Arabidopsis</taxon>
    </lineage>
</organism>
<dbReference type="EMBL" id="AJ303348">
    <property type="protein sequence ID" value="CAC36386.1"/>
    <property type="molecule type" value="mRNA"/>
</dbReference>
<dbReference type="EMBL" id="AF366368">
    <property type="protein sequence ID" value="AAK53391.1"/>
    <property type="molecule type" value="mRNA"/>
</dbReference>
<dbReference type="EMBL" id="AC002328">
    <property type="protein sequence ID" value="AAF79509.1"/>
    <property type="status" value="ALT_SEQ"/>
    <property type="molecule type" value="Genomic_DNA"/>
</dbReference>
<dbReference type="EMBL" id="CP002684">
    <property type="protein sequence ID" value="AEE33274.1"/>
    <property type="molecule type" value="Genomic_DNA"/>
</dbReference>
<dbReference type="EMBL" id="CP002684">
    <property type="protein sequence ID" value="AEE33275.1"/>
    <property type="molecule type" value="Genomic_DNA"/>
</dbReference>
<dbReference type="EMBL" id="AY080722">
    <property type="protein sequence ID" value="AAL86324.1"/>
    <property type="molecule type" value="mRNA"/>
</dbReference>
<dbReference type="RefSeq" id="NP_564698.1">
    <molecule id="Q8RXR2-1"/>
    <property type="nucleotide sequence ID" value="NM_104438.4"/>
</dbReference>
<dbReference type="RefSeq" id="NP_849813.1">
    <molecule id="Q8RXR2-2"/>
    <property type="nucleotide sequence ID" value="NM_179482.3"/>
</dbReference>
<dbReference type="SMR" id="Q8RXR2"/>
<dbReference type="FunCoup" id="Q8RXR2">
    <property type="interactions" value="743"/>
</dbReference>
<dbReference type="STRING" id="3702.Q8RXR2"/>
<dbReference type="PaxDb" id="3702-AT1G55620.2"/>
<dbReference type="ProteomicsDB" id="246604">
    <molecule id="Q8RXR2-1"/>
</dbReference>
<dbReference type="EnsemblPlants" id="AT1G55620.1">
    <molecule id="Q8RXR2-2"/>
    <property type="protein sequence ID" value="AT1G55620.1"/>
    <property type="gene ID" value="AT1G55620"/>
</dbReference>
<dbReference type="EnsemblPlants" id="AT1G55620.2">
    <molecule id="Q8RXR2-1"/>
    <property type="protein sequence ID" value="AT1G55620.2"/>
    <property type="gene ID" value="AT1G55620"/>
</dbReference>
<dbReference type="GeneID" id="842011"/>
<dbReference type="Gramene" id="AT1G55620.1">
    <molecule id="Q8RXR2-2"/>
    <property type="protein sequence ID" value="AT1G55620.1"/>
    <property type="gene ID" value="AT1G55620"/>
</dbReference>
<dbReference type="Gramene" id="AT1G55620.2">
    <molecule id="Q8RXR2-1"/>
    <property type="protein sequence ID" value="AT1G55620.2"/>
    <property type="gene ID" value="AT1G55620"/>
</dbReference>
<dbReference type="KEGG" id="ath:AT1G55620"/>
<dbReference type="Araport" id="AT1G55620"/>
<dbReference type="TAIR" id="AT1G55620">
    <property type="gene designation" value="CLC-F"/>
</dbReference>
<dbReference type="eggNOG" id="KOG0475">
    <property type="taxonomic scope" value="Eukaryota"/>
</dbReference>
<dbReference type="InParanoid" id="Q8RXR2"/>
<dbReference type="OrthoDB" id="4564at2759"/>
<dbReference type="PhylomeDB" id="Q8RXR2"/>
<dbReference type="PRO" id="PR:Q8RXR2"/>
<dbReference type="Proteomes" id="UP000006548">
    <property type="component" value="Chromosome 1"/>
</dbReference>
<dbReference type="ExpressionAtlas" id="Q8RXR2">
    <property type="expression patterns" value="baseline and differential"/>
</dbReference>
<dbReference type="GO" id="GO:0034707">
    <property type="term" value="C:chloride channel complex"/>
    <property type="evidence" value="ECO:0007669"/>
    <property type="project" value="UniProtKB-KW"/>
</dbReference>
<dbReference type="GO" id="GO:0009507">
    <property type="term" value="C:chloroplast"/>
    <property type="evidence" value="ECO:0000314"/>
    <property type="project" value="TAIR"/>
</dbReference>
<dbReference type="GO" id="GO:0005794">
    <property type="term" value="C:Golgi apparatus"/>
    <property type="evidence" value="ECO:0000314"/>
    <property type="project" value="TAIR"/>
</dbReference>
<dbReference type="GO" id="GO:0005254">
    <property type="term" value="F:chloride channel activity"/>
    <property type="evidence" value="ECO:0007669"/>
    <property type="project" value="UniProtKB-KW"/>
</dbReference>
<dbReference type="CDD" id="cd04592">
    <property type="entry name" value="CBS_pair_voltage-gated_CLC_euk_bac"/>
    <property type="match status" value="1"/>
</dbReference>
<dbReference type="CDD" id="cd00400">
    <property type="entry name" value="Voltage_gated_ClC"/>
    <property type="match status" value="1"/>
</dbReference>
<dbReference type="FunFam" id="1.10.3080.10:FF:000008">
    <property type="entry name" value="Chloride channel protein"/>
    <property type="match status" value="1"/>
</dbReference>
<dbReference type="FunFam" id="3.10.580.10:FF:000113">
    <property type="entry name" value="Chloride channel protein"/>
    <property type="match status" value="1"/>
</dbReference>
<dbReference type="Gene3D" id="3.10.580.10">
    <property type="entry name" value="CBS-domain"/>
    <property type="match status" value="1"/>
</dbReference>
<dbReference type="Gene3D" id="1.10.3080.10">
    <property type="entry name" value="Clc chloride channel"/>
    <property type="match status" value="1"/>
</dbReference>
<dbReference type="InterPro" id="IPR000644">
    <property type="entry name" value="CBS_dom"/>
</dbReference>
<dbReference type="InterPro" id="IPR046342">
    <property type="entry name" value="CBS_dom_sf"/>
</dbReference>
<dbReference type="InterPro" id="IPR014743">
    <property type="entry name" value="Cl-channel_core"/>
</dbReference>
<dbReference type="InterPro" id="IPR001807">
    <property type="entry name" value="ClC"/>
</dbReference>
<dbReference type="InterPro" id="IPR050368">
    <property type="entry name" value="ClC-type_chloride_channel"/>
</dbReference>
<dbReference type="PANTHER" id="PTHR43427">
    <property type="entry name" value="CHLORIDE CHANNEL PROTEIN CLC-E"/>
    <property type="match status" value="1"/>
</dbReference>
<dbReference type="PANTHER" id="PTHR43427:SF3">
    <property type="entry name" value="CHLORIDE CHANNEL PROTEIN CLC-F"/>
    <property type="match status" value="1"/>
</dbReference>
<dbReference type="Pfam" id="PF00571">
    <property type="entry name" value="CBS"/>
    <property type="match status" value="2"/>
</dbReference>
<dbReference type="Pfam" id="PF00654">
    <property type="entry name" value="Voltage_CLC"/>
    <property type="match status" value="1"/>
</dbReference>
<dbReference type="PRINTS" id="PR00762">
    <property type="entry name" value="CLCHANNEL"/>
</dbReference>
<dbReference type="SMART" id="SM00116">
    <property type="entry name" value="CBS"/>
    <property type="match status" value="2"/>
</dbReference>
<dbReference type="SUPFAM" id="SSF54631">
    <property type="entry name" value="CBS-domain pair"/>
    <property type="match status" value="1"/>
</dbReference>
<dbReference type="SUPFAM" id="SSF81340">
    <property type="entry name" value="Clc chloride channel"/>
    <property type="match status" value="1"/>
</dbReference>
<dbReference type="PROSITE" id="PS51371">
    <property type="entry name" value="CBS"/>
    <property type="match status" value="2"/>
</dbReference>
<proteinExistence type="evidence at transcript level"/>
<gene>
    <name type="primary">CLC-F</name>
    <name type="synonym">CBSCLC1</name>
    <name type="ordered locus">At1g55620</name>
    <name type="ORF">F20N2.5</name>
</gene>
<evidence type="ECO:0000250" key="1"/>
<evidence type="ECO:0000255" key="2"/>
<evidence type="ECO:0000255" key="3">
    <source>
        <dbReference type="PROSITE-ProRule" id="PRU00703"/>
    </source>
</evidence>
<evidence type="ECO:0000256" key="4">
    <source>
        <dbReference type="SAM" id="MobiDB-lite"/>
    </source>
</evidence>
<evidence type="ECO:0000303" key="5">
    <source>
    </source>
</evidence>
<evidence type="ECO:0000305" key="6"/>
<protein>
    <recommendedName>
        <fullName>Chloride channel protein CLC-f</fullName>
        <shortName>AtCLC-f</shortName>
    </recommendedName>
    <alternativeName>
        <fullName>CBS domain-containing protein CBSCLC1</fullName>
    </alternativeName>
</protein>
<feature type="chain" id="PRO_0000094470" description="Chloride channel protein CLC-f">
    <location>
        <begin position="1"/>
        <end position="781"/>
    </location>
</feature>
<feature type="transmembrane region" description="Helical; Name=1" evidence="2">
    <location>
        <begin position="129"/>
        <end position="149"/>
    </location>
</feature>
<feature type="transmembrane region" description="Helical; Name=2" evidence="2">
    <location>
        <begin position="184"/>
        <end position="204"/>
    </location>
</feature>
<feature type="transmembrane region" description="Helical; Name=3" evidence="2">
    <location>
        <begin position="221"/>
        <end position="241"/>
    </location>
</feature>
<feature type="transmembrane region" description="Helical; Name=4" evidence="2">
    <location>
        <begin position="250"/>
        <end position="270"/>
    </location>
</feature>
<feature type="transmembrane region" description="Helical; Name=5" evidence="2">
    <location>
        <begin position="279"/>
        <end position="299"/>
    </location>
</feature>
<feature type="transmembrane region" description="Helical; Name=6" evidence="2">
    <location>
        <begin position="314"/>
        <end position="334"/>
    </location>
</feature>
<feature type="transmembrane region" description="Helical; Name=7" evidence="2">
    <location>
        <begin position="350"/>
        <end position="370"/>
    </location>
</feature>
<feature type="transmembrane region" description="Helical; Name=8" evidence="2">
    <location>
        <begin position="388"/>
        <end position="408"/>
    </location>
</feature>
<feature type="transmembrane region" description="Helical; Name=9" evidence="2">
    <location>
        <begin position="433"/>
        <end position="453"/>
    </location>
</feature>
<feature type="transmembrane region" description="Helical; Name=10" evidence="2">
    <location>
        <begin position="457"/>
        <end position="477"/>
    </location>
</feature>
<feature type="transmembrane region" description="Helical; Name=11" evidence="2">
    <location>
        <begin position="502"/>
        <end position="522"/>
    </location>
</feature>
<feature type="transmembrane region" description="Helical; Name=12" evidence="2">
    <location>
        <begin position="523"/>
        <end position="543"/>
    </location>
</feature>
<feature type="transmembrane region" description="Helical; Name=13" evidence="2">
    <location>
        <begin position="726"/>
        <end position="746"/>
    </location>
</feature>
<feature type="domain" description="CBS 1" evidence="3">
    <location>
        <begin position="621"/>
        <end position="677"/>
    </location>
</feature>
<feature type="domain" description="CBS 2" evidence="3">
    <location>
        <begin position="699"/>
        <end position="763"/>
    </location>
</feature>
<feature type="region of interest" description="Disordered" evidence="4">
    <location>
        <begin position="1"/>
        <end position="41"/>
    </location>
</feature>
<feature type="region of interest" description="Disordered" evidence="4">
    <location>
        <begin position="79"/>
        <end position="98"/>
    </location>
</feature>
<feature type="region of interest" description="Disordered" evidence="4">
    <location>
        <begin position="553"/>
        <end position="584"/>
    </location>
</feature>
<feature type="compositionally biased region" description="Basic and acidic residues" evidence="4">
    <location>
        <begin position="10"/>
        <end position="20"/>
    </location>
</feature>
<feature type="compositionally biased region" description="Basic and acidic residues" evidence="4">
    <location>
        <begin position="575"/>
        <end position="584"/>
    </location>
</feature>
<feature type="splice variant" id="VSP_009325" description="In isoform 2." evidence="5">
    <location>
        <begin position="1"/>
        <end position="196"/>
    </location>
</feature>
<feature type="sequence conflict" description="In Ref. 5; AAL86324." evidence="6" ref="5">
    <original>E</original>
    <variation>K</variation>
    <location>
        <position position="643"/>
    </location>
</feature>
<reference key="1">
    <citation type="journal article" date="2001" name="Plant Cell">
        <title>Comparative sequence analysis reveals extensive microcolinearity in the lateral suppressor regions of the tomato, Arabidopsis, and Capsella genomes.</title>
        <authorList>
            <person name="Rossberg M."/>
            <person name="Theres K."/>
            <person name="Acarkan A."/>
            <person name="Herrero R."/>
            <person name="Schmitt T."/>
            <person name="Schumacher K."/>
            <person name="Schmitz G."/>
            <person name="Schmidt R."/>
        </authorList>
    </citation>
    <scope>NUCLEOTIDE SEQUENCE [MRNA] (ISOFORM 1)</scope>
    <source>
        <strain>cv. Columbia</strain>
    </source>
</reference>
<reference key="2">
    <citation type="submission" date="2001-03" db="EMBL/GenBank/DDBJ databases">
        <title>Molecular and functional characterization of AtCLC-f, a putative new Arabidopsis chloride channel.</title>
        <authorList>
            <person name="Vinauger-Douard M."/>
            <person name="Charon C."/>
            <person name="Lapous D."/>
            <person name="Allot M."/>
            <person name="Granier F."/>
            <person name="Bouchez D."/>
            <person name="Barbier-Brygoo H."/>
            <person name="Ephritikhine G."/>
        </authorList>
    </citation>
    <scope>NUCLEOTIDE SEQUENCE [MRNA] (ISOFORM 1)</scope>
    <source>
        <strain>cv. Columbia</strain>
        <tissue>Aerial part</tissue>
    </source>
</reference>
<reference key="3">
    <citation type="journal article" date="2000" name="Nature">
        <title>Sequence and analysis of chromosome 1 of the plant Arabidopsis thaliana.</title>
        <authorList>
            <person name="Theologis A."/>
            <person name="Ecker J.R."/>
            <person name="Palm C.J."/>
            <person name="Federspiel N.A."/>
            <person name="Kaul S."/>
            <person name="White O."/>
            <person name="Alonso J."/>
            <person name="Altafi H."/>
            <person name="Araujo R."/>
            <person name="Bowman C.L."/>
            <person name="Brooks S.Y."/>
            <person name="Buehler E."/>
            <person name="Chan A."/>
            <person name="Chao Q."/>
            <person name="Chen H."/>
            <person name="Cheuk R.F."/>
            <person name="Chin C.W."/>
            <person name="Chung M.K."/>
            <person name="Conn L."/>
            <person name="Conway A.B."/>
            <person name="Conway A.R."/>
            <person name="Creasy T.H."/>
            <person name="Dewar K."/>
            <person name="Dunn P."/>
            <person name="Etgu P."/>
            <person name="Feldblyum T.V."/>
            <person name="Feng J.-D."/>
            <person name="Fong B."/>
            <person name="Fujii C.Y."/>
            <person name="Gill J.E."/>
            <person name="Goldsmith A.D."/>
            <person name="Haas B."/>
            <person name="Hansen N.F."/>
            <person name="Hughes B."/>
            <person name="Huizar L."/>
            <person name="Hunter J.L."/>
            <person name="Jenkins J."/>
            <person name="Johnson-Hopson C."/>
            <person name="Khan S."/>
            <person name="Khaykin E."/>
            <person name="Kim C.J."/>
            <person name="Koo H.L."/>
            <person name="Kremenetskaia I."/>
            <person name="Kurtz D.B."/>
            <person name="Kwan A."/>
            <person name="Lam B."/>
            <person name="Langin-Hooper S."/>
            <person name="Lee A."/>
            <person name="Lee J.M."/>
            <person name="Lenz C.A."/>
            <person name="Li J.H."/>
            <person name="Li Y.-P."/>
            <person name="Lin X."/>
            <person name="Liu S.X."/>
            <person name="Liu Z.A."/>
            <person name="Luros J.S."/>
            <person name="Maiti R."/>
            <person name="Marziali A."/>
            <person name="Militscher J."/>
            <person name="Miranda M."/>
            <person name="Nguyen M."/>
            <person name="Nierman W.C."/>
            <person name="Osborne B.I."/>
            <person name="Pai G."/>
            <person name="Peterson J."/>
            <person name="Pham P.K."/>
            <person name="Rizzo M."/>
            <person name="Rooney T."/>
            <person name="Rowley D."/>
            <person name="Sakano H."/>
            <person name="Salzberg S.L."/>
            <person name="Schwartz J.R."/>
            <person name="Shinn P."/>
            <person name="Southwick A.M."/>
            <person name="Sun H."/>
            <person name="Tallon L.J."/>
            <person name="Tambunga G."/>
            <person name="Toriumi M.J."/>
            <person name="Town C.D."/>
            <person name="Utterback T."/>
            <person name="Van Aken S."/>
            <person name="Vaysberg M."/>
            <person name="Vysotskaia V.S."/>
            <person name="Walker M."/>
            <person name="Wu D."/>
            <person name="Yu G."/>
            <person name="Fraser C.M."/>
            <person name="Venter J.C."/>
            <person name="Davis R.W."/>
        </authorList>
    </citation>
    <scope>NUCLEOTIDE SEQUENCE [LARGE SCALE GENOMIC DNA]</scope>
    <source>
        <strain>cv. Columbia</strain>
    </source>
</reference>
<reference key="4">
    <citation type="journal article" date="2017" name="Plant J.">
        <title>Araport11: a complete reannotation of the Arabidopsis thaliana reference genome.</title>
        <authorList>
            <person name="Cheng C.Y."/>
            <person name="Krishnakumar V."/>
            <person name="Chan A.P."/>
            <person name="Thibaud-Nissen F."/>
            <person name="Schobel S."/>
            <person name="Town C.D."/>
        </authorList>
    </citation>
    <scope>GENOME REANNOTATION</scope>
    <source>
        <strain>cv. Columbia</strain>
    </source>
</reference>
<reference key="5">
    <citation type="journal article" date="2003" name="Science">
        <title>Empirical analysis of transcriptional activity in the Arabidopsis genome.</title>
        <authorList>
            <person name="Yamada K."/>
            <person name="Lim J."/>
            <person name="Dale J.M."/>
            <person name="Chen H."/>
            <person name="Shinn P."/>
            <person name="Palm C.J."/>
            <person name="Southwick A.M."/>
            <person name="Wu H.C."/>
            <person name="Kim C.J."/>
            <person name="Nguyen M."/>
            <person name="Pham P.K."/>
            <person name="Cheuk R.F."/>
            <person name="Karlin-Newmann G."/>
            <person name="Liu S.X."/>
            <person name="Lam B."/>
            <person name="Sakano H."/>
            <person name="Wu T."/>
            <person name="Yu G."/>
            <person name="Miranda M."/>
            <person name="Quach H.L."/>
            <person name="Tripp M."/>
            <person name="Chang C.H."/>
            <person name="Lee J.M."/>
            <person name="Toriumi M.J."/>
            <person name="Chan M.M."/>
            <person name="Tang C.C."/>
            <person name="Onodera C.S."/>
            <person name="Deng J.M."/>
            <person name="Akiyama K."/>
            <person name="Ansari Y."/>
            <person name="Arakawa T."/>
            <person name="Banh J."/>
            <person name="Banno F."/>
            <person name="Bowser L."/>
            <person name="Brooks S.Y."/>
            <person name="Carninci P."/>
            <person name="Chao Q."/>
            <person name="Choy N."/>
            <person name="Enju A."/>
            <person name="Goldsmith A.D."/>
            <person name="Gurjal M."/>
            <person name="Hansen N.F."/>
            <person name="Hayashizaki Y."/>
            <person name="Johnson-Hopson C."/>
            <person name="Hsuan V.W."/>
            <person name="Iida K."/>
            <person name="Karnes M."/>
            <person name="Khan S."/>
            <person name="Koesema E."/>
            <person name="Ishida J."/>
            <person name="Jiang P.X."/>
            <person name="Jones T."/>
            <person name="Kawai J."/>
            <person name="Kamiya A."/>
            <person name="Meyers C."/>
            <person name="Nakajima M."/>
            <person name="Narusaka M."/>
            <person name="Seki M."/>
            <person name="Sakurai T."/>
            <person name="Satou M."/>
            <person name="Tamse R."/>
            <person name="Vaysberg M."/>
            <person name="Wallender E.K."/>
            <person name="Wong C."/>
            <person name="Yamamura Y."/>
            <person name="Yuan S."/>
            <person name="Shinozaki K."/>
            <person name="Davis R.W."/>
            <person name="Theologis A."/>
            <person name="Ecker J.R."/>
        </authorList>
    </citation>
    <scope>NUCLEOTIDE SEQUENCE [LARGE SCALE MRNA] (ISOFORM 2)</scope>
    <source>
        <strain>cv. Columbia</strain>
    </source>
</reference>
<reference key="6">
    <citation type="journal article" date="2009" name="BMC Genomics">
        <title>Genome wide expression analysis of CBS domain containing proteins in Arabidopsis thaliana (L.) Heynh and Oryza sativa L. reveals their developmental and stress regulation.</title>
        <authorList>
            <person name="Kushwaha H.R."/>
            <person name="Singh A.K."/>
            <person name="Sopory S.K."/>
            <person name="Singla-Pareek S.L."/>
            <person name="Pareek A."/>
        </authorList>
    </citation>
    <scope>GENE FAMILY</scope>
    <scope>NOMENCLATURE</scope>
</reference>
<comment type="function">
    <text>Voltage-gated chloride channel.</text>
</comment>
<comment type="subunit">
    <text evidence="1">Homodimer.</text>
</comment>
<comment type="subcellular location">
    <subcellularLocation>
        <location>Membrane</location>
        <topology>Multi-pass membrane protein</topology>
    </subcellularLocation>
</comment>
<comment type="alternative products">
    <event type="alternative splicing"/>
    <isoform>
        <id>Q8RXR2-1</id>
        <name>1</name>
        <sequence type="displayed"/>
    </isoform>
    <isoform>
        <id>Q8RXR2-2</id>
        <name>2</name>
        <sequence type="described" ref="VSP_009325"/>
    </isoform>
</comment>
<comment type="miscellaneous">
    <molecule>Isoform 2</molecule>
    <text evidence="6">May be due to a competing acceptor splice site.</text>
</comment>
<comment type="similarity">
    <text evidence="6">Belongs to the chloride channel (TC 2.A.49) family.</text>
</comment>
<comment type="sequence caution" evidence="6">
    <conflict type="erroneous gene model prediction">
        <sequence resource="EMBL-CDS" id="AAF79509"/>
    </conflict>
</comment>
<accession>Q8RXR2</accession>
<accession>Q9ARM3</accession>
<accession>Q9LG04</accession>
<sequence length="781" mass="83549">MSSGGAGEYNEDRHLLRSTDGDEVGIGGGEGDLDVESQSPAIRSGAGGVRDLFKHIDRRFSLSGRRLSFKRMENIRVDRERHNPSSSSAFSAAGEEDGGGISNLHSVDDRNDEYGFDEEVLGDSAPPEWALLLIGCLIGVAAGICVAGFNKGVHVIHEWAWAGTPNEGAAWLRLQRLADTWHRILLIPVTGGVIVGMMHGLLEILDQIRQSNSSQRQGLDFLAGIYPVIKAIQAAVTLGTGCSLGPEGPSVDIGKSCANGFALMMENNRERRIALTAAGAASGIASGFNAAVAGCFFAIETVLRPLRAENSPPFTTAMIILASVISSTVSNALLGTQSAFTVPSYDLKSAAELPLYLILGMLCGAVSVVFSRLVTWFTKSFDFIKDKFGLPAIVCPALGGLGAGIIALKYPGILYWGFTNVEEILHTGKSASAPGIWLLAQLAAAKVVATALCKGSGLVGGLYAPSLMIGAAVGAVFGGSAAEIINRAIPGNAAVAQPQAYALVGMAATLASMCSVPLTSVLLLFELTKDYRILLPLMGAVGLAIWVPSVANQGKESDSSEGRSTGRGYSSLSPSERKTEGVWRHTDNADSLELTVIENPDHNSFLDEETILEDLKVMRVMSKNYVKVSSGTTLREARNILKESHQNCIMVVDDDDFLAGILTHGDIRRYLSNNASTILDENTCPVSSVCTKKISYRGQERGLLTCYPDATVGVAKELMEARGVKQLPVVKRGEVIHKGKRRKLLGLLHYDSIWTFLRDEMSRRRSINDRRKDKEVGTNGH</sequence>